<protein>
    <recommendedName>
        <fullName evidence="1">Large ribosomal subunit protein bL20</fullName>
    </recommendedName>
    <alternativeName>
        <fullName evidence="2">50S ribosomal protein L20</fullName>
    </alternativeName>
</protein>
<dbReference type="EMBL" id="CP000416">
    <property type="protein sequence ID" value="ABJ64166.1"/>
    <property type="molecule type" value="Genomic_DNA"/>
</dbReference>
<dbReference type="RefSeq" id="WP_011667796.1">
    <property type="nucleotide sequence ID" value="NC_008497.1"/>
</dbReference>
<dbReference type="SMR" id="Q03RK6"/>
<dbReference type="STRING" id="387344.LVIS_1033"/>
<dbReference type="DNASU" id="4414290"/>
<dbReference type="GeneID" id="56992746"/>
<dbReference type="KEGG" id="lbr:LVIS_1033"/>
<dbReference type="eggNOG" id="COG0292">
    <property type="taxonomic scope" value="Bacteria"/>
</dbReference>
<dbReference type="HOGENOM" id="CLU_123265_0_1_9"/>
<dbReference type="Proteomes" id="UP000001652">
    <property type="component" value="Chromosome"/>
</dbReference>
<dbReference type="GO" id="GO:1990904">
    <property type="term" value="C:ribonucleoprotein complex"/>
    <property type="evidence" value="ECO:0007669"/>
    <property type="project" value="UniProtKB-KW"/>
</dbReference>
<dbReference type="GO" id="GO:0005840">
    <property type="term" value="C:ribosome"/>
    <property type="evidence" value="ECO:0007669"/>
    <property type="project" value="UniProtKB-KW"/>
</dbReference>
<dbReference type="GO" id="GO:0019843">
    <property type="term" value="F:rRNA binding"/>
    <property type="evidence" value="ECO:0007669"/>
    <property type="project" value="UniProtKB-UniRule"/>
</dbReference>
<dbReference type="GO" id="GO:0003735">
    <property type="term" value="F:structural constituent of ribosome"/>
    <property type="evidence" value="ECO:0007669"/>
    <property type="project" value="InterPro"/>
</dbReference>
<dbReference type="GO" id="GO:0000027">
    <property type="term" value="P:ribosomal large subunit assembly"/>
    <property type="evidence" value="ECO:0007669"/>
    <property type="project" value="UniProtKB-UniRule"/>
</dbReference>
<dbReference type="GO" id="GO:0006412">
    <property type="term" value="P:translation"/>
    <property type="evidence" value="ECO:0007669"/>
    <property type="project" value="InterPro"/>
</dbReference>
<dbReference type="CDD" id="cd07026">
    <property type="entry name" value="Ribosomal_L20"/>
    <property type="match status" value="1"/>
</dbReference>
<dbReference type="FunFam" id="1.10.1900.20:FF:000001">
    <property type="entry name" value="50S ribosomal protein L20"/>
    <property type="match status" value="1"/>
</dbReference>
<dbReference type="Gene3D" id="6.10.160.10">
    <property type="match status" value="1"/>
</dbReference>
<dbReference type="Gene3D" id="1.10.1900.20">
    <property type="entry name" value="Ribosomal protein L20"/>
    <property type="match status" value="1"/>
</dbReference>
<dbReference type="HAMAP" id="MF_00382">
    <property type="entry name" value="Ribosomal_bL20"/>
    <property type="match status" value="1"/>
</dbReference>
<dbReference type="InterPro" id="IPR005813">
    <property type="entry name" value="Ribosomal_bL20"/>
</dbReference>
<dbReference type="InterPro" id="IPR049946">
    <property type="entry name" value="RIBOSOMAL_L20_CS"/>
</dbReference>
<dbReference type="InterPro" id="IPR035566">
    <property type="entry name" value="Ribosomal_protein_bL20_C"/>
</dbReference>
<dbReference type="NCBIfam" id="TIGR01032">
    <property type="entry name" value="rplT_bact"/>
    <property type="match status" value="1"/>
</dbReference>
<dbReference type="PANTHER" id="PTHR10986">
    <property type="entry name" value="39S RIBOSOMAL PROTEIN L20"/>
    <property type="match status" value="1"/>
</dbReference>
<dbReference type="Pfam" id="PF00453">
    <property type="entry name" value="Ribosomal_L20"/>
    <property type="match status" value="1"/>
</dbReference>
<dbReference type="PRINTS" id="PR00062">
    <property type="entry name" value="RIBOSOMALL20"/>
</dbReference>
<dbReference type="SUPFAM" id="SSF74731">
    <property type="entry name" value="Ribosomal protein L20"/>
    <property type="match status" value="1"/>
</dbReference>
<dbReference type="PROSITE" id="PS00937">
    <property type="entry name" value="RIBOSOMAL_L20"/>
    <property type="match status" value="1"/>
</dbReference>
<keyword id="KW-1185">Reference proteome</keyword>
<keyword id="KW-0687">Ribonucleoprotein</keyword>
<keyword id="KW-0689">Ribosomal protein</keyword>
<keyword id="KW-0694">RNA-binding</keyword>
<keyword id="KW-0699">rRNA-binding</keyword>
<sequence length="119" mass="13341">MPRVKGGTVTRARRKKVLKLAKGYRGSKHRLFKVAKDQVMKGRQYAFRDRKATKRNFRKLWIARINAAARMNGLSYSKLMHGLKLANIDVNRKMLADLAVNDAAAFAALAEQAKTALAA</sequence>
<reference key="1">
    <citation type="journal article" date="2006" name="Proc. Natl. Acad. Sci. U.S.A.">
        <title>Comparative genomics of the lactic acid bacteria.</title>
        <authorList>
            <person name="Makarova K.S."/>
            <person name="Slesarev A."/>
            <person name="Wolf Y.I."/>
            <person name="Sorokin A."/>
            <person name="Mirkin B."/>
            <person name="Koonin E.V."/>
            <person name="Pavlov A."/>
            <person name="Pavlova N."/>
            <person name="Karamychev V."/>
            <person name="Polouchine N."/>
            <person name="Shakhova V."/>
            <person name="Grigoriev I."/>
            <person name="Lou Y."/>
            <person name="Rohksar D."/>
            <person name="Lucas S."/>
            <person name="Huang K."/>
            <person name="Goodstein D.M."/>
            <person name="Hawkins T."/>
            <person name="Plengvidhya V."/>
            <person name="Welker D."/>
            <person name="Hughes J."/>
            <person name="Goh Y."/>
            <person name="Benson A."/>
            <person name="Baldwin K."/>
            <person name="Lee J.-H."/>
            <person name="Diaz-Muniz I."/>
            <person name="Dosti B."/>
            <person name="Smeianov V."/>
            <person name="Wechter W."/>
            <person name="Barabote R."/>
            <person name="Lorca G."/>
            <person name="Altermann E."/>
            <person name="Barrangou R."/>
            <person name="Ganesan B."/>
            <person name="Xie Y."/>
            <person name="Rawsthorne H."/>
            <person name="Tamir D."/>
            <person name="Parker C."/>
            <person name="Breidt F."/>
            <person name="Broadbent J.R."/>
            <person name="Hutkins R."/>
            <person name="O'Sullivan D."/>
            <person name="Steele J."/>
            <person name="Unlu G."/>
            <person name="Saier M.H. Jr."/>
            <person name="Klaenhammer T."/>
            <person name="Richardson P."/>
            <person name="Kozyavkin S."/>
            <person name="Weimer B.C."/>
            <person name="Mills D.A."/>
        </authorList>
    </citation>
    <scope>NUCLEOTIDE SEQUENCE [LARGE SCALE GENOMIC DNA]</scope>
    <source>
        <strain>ATCC 367 / BCRC 12310 / CIP 105137 / JCM 1170 / LMG 11437 / NCIMB 947 / NCTC 947</strain>
    </source>
</reference>
<evidence type="ECO:0000255" key="1">
    <source>
        <dbReference type="HAMAP-Rule" id="MF_00382"/>
    </source>
</evidence>
<evidence type="ECO:0000305" key="2"/>
<gene>
    <name evidence="1" type="primary">rplT</name>
    <name type="ordered locus">LVIS_1033</name>
</gene>
<comment type="function">
    <text evidence="1">Binds directly to 23S ribosomal RNA and is necessary for the in vitro assembly process of the 50S ribosomal subunit. It is not involved in the protein synthesizing functions of that subunit.</text>
</comment>
<comment type="similarity">
    <text evidence="1">Belongs to the bacterial ribosomal protein bL20 family.</text>
</comment>
<proteinExistence type="inferred from homology"/>
<organism>
    <name type="scientific">Levilactobacillus brevis (strain ATCC 367 / BCRC 12310 / CIP 105137 / JCM 1170 / LMG 11437 / NCIMB 947 / NCTC 947)</name>
    <name type="common">Lactobacillus brevis</name>
    <dbReference type="NCBI Taxonomy" id="387344"/>
    <lineage>
        <taxon>Bacteria</taxon>
        <taxon>Bacillati</taxon>
        <taxon>Bacillota</taxon>
        <taxon>Bacilli</taxon>
        <taxon>Lactobacillales</taxon>
        <taxon>Lactobacillaceae</taxon>
        <taxon>Levilactobacillus</taxon>
    </lineage>
</organism>
<name>RL20_LEVBA</name>
<accession>Q03RK6</accession>
<feature type="chain" id="PRO_1000048997" description="Large ribosomal subunit protein bL20">
    <location>
        <begin position="1"/>
        <end position="119"/>
    </location>
</feature>